<keyword id="KW-0027">Amidation</keyword>
<keyword id="KW-0965">Cell junction</keyword>
<keyword id="KW-1003">Cell membrane</keyword>
<keyword id="KW-0966">Cell projection</keyword>
<keyword id="KW-0165">Cleavage on pair of basic residues</keyword>
<keyword id="KW-0963">Cytoplasm</keyword>
<keyword id="KW-0903">Direct protein sequencing</keyword>
<keyword id="KW-0472">Membrane</keyword>
<keyword id="KW-0597">Phosphoprotein</keyword>
<keyword id="KW-1185">Reference proteome</keyword>
<keyword id="KW-0832">Ubl conjugation</keyword>
<dbReference type="EMBL" id="AF396456">
    <property type="protein sequence ID" value="AAK81859.1"/>
    <property type="molecule type" value="mRNA"/>
</dbReference>
<dbReference type="PIR" id="S17837">
    <property type="entry name" value="S17837"/>
</dbReference>
<dbReference type="STRING" id="9823.ENSSSCP00000016740"/>
<dbReference type="PaxDb" id="9823-ENSSSCP00000016740"/>
<dbReference type="PeptideAtlas" id="P28220"/>
<dbReference type="eggNOG" id="KOG4225">
    <property type="taxonomic scope" value="Eukaryota"/>
</dbReference>
<dbReference type="HOGENOM" id="CLU_1717496_0_0_1"/>
<dbReference type="InParanoid" id="P28220"/>
<dbReference type="Proteomes" id="UP000008227">
    <property type="component" value="Unplaced"/>
</dbReference>
<dbReference type="Proteomes" id="UP000314985">
    <property type="component" value="Unplaced"/>
</dbReference>
<dbReference type="Proteomes" id="UP000694570">
    <property type="component" value="Unplaced"/>
</dbReference>
<dbReference type="Proteomes" id="UP000694571">
    <property type="component" value="Unplaced"/>
</dbReference>
<dbReference type="Proteomes" id="UP000694720">
    <property type="component" value="Unplaced"/>
</dbReference>
<dbReference type="Proteomes" id="UP000694722">
    <property type="component" value="Unplaced"/>
</dbReference>
<dbReference type="Proteomes" id="UP000694723">
    <property type="component" value="Unplaced"/>
</dbReference>
<dbReference type="Proteomes" id="UP000694724">
    <property type="component" value="Unplaced"/>
</dbReference>
<dbReference type="Proteomes" id="UP000694725">
    <property type="component" value="Unplaced"/>
</dbReference>
<dbReference type="Proteomes" id="UP000694726">
    <property type="component" value="Unplaced"/>
</dbReference>
<dbReference type="Proteomes" id="UP000694727">
    <property type="component" value="Unplaced"/>
</dbReference>
<dbReference type="Proteomes" id="UP000694728">
    <property type="component" value="Unplaced"/>
</dbReference>
<dbReference type="GO" id="GO:0016324">
    <property type="term" value="C:apical plasma membrane"/>
    <property type="evidence" value="ECO:0007669"/>
    <property type="project" value="UniProtKB-SubCell"/>
</dbReference>
<dbReference type="GO" id="GO:0005925">
    <property type="term" value="C:focal adhesion"/>
    <property type="evidence" value="ECO:0007669"/>
    <property type="project" value="UniProtKB-SubCell"/>
</dbReference>
<dbReference type="GO" id="GO:0030027">
    <property type="term" value="C:lamellipodium"/>
    <property type="evidence" value="ECO:0007669"/>
    <property type="project" value="UniProtKB-SubCell"/>
</dbReference>
<dbReference type="GO" id="GO:0048471">
    <property type="term" value="C:perinuclear region of cytoplasm"/>
    <property type="evidence" value="ECO:0007669"/>
    <property type="project" value="UniProtKB-SubCell"/>
</dbReference>
<dbReference type="InterPro" id="IPR003127">
    <property type="entry name" value="SoHo_dom"/>
</dbReference>
<dbReference type="Pfam" id="PF02208">
    <property type="entry name" value="Sorb"/>
    <property type="match status" value="1"/>
</dbReference>
<dbReference type="SMART" id="SM00459">
    <property type="entry name" value="Sorb"/>
    <property type="match status" value="1"/>
</dbReference>
<dbReference type="PROSITE" id="PS50831">
    <property type="entry name" value="SOHO"/>
    <property type="match status" value="1"/>
</dbReference>
<proteinExistence type="evidence at protein level"/>
<comment type="function">
    <text evidence="2 3">Adapter protein that plays a role in the assembling of signaling complexes, being a link between ABL kinases and actin cytoskeleton. Can form complex with ABL1 and CBL, thus promoting ubiquitination and degradation of ABL1 or with AKT1 and PAK1, thus mediating AKT1-mediated activation of PAK1 (By similarity). May play a role in the regulation of pancreatic cell adhesion, possibly by acting on WASF1 phosphorylation, enhancing phosphorylation by ABL1, as well as dephosphorylation by PTPN12. Increases water and sodium absorption in the intestine and gall-bladder.</text>
</comment>
<comment type="subunit">
    <text evidence="2 3">Interacts with ABL1/c-Abl, ABL2/v-Abl/Arg, ACTN, AKT1, CBL, PALLD and PAK1 (By similarity). Interacts with ABL, CBL, DNM1, DNM2, FLOT1, AFDN, PTK2B/PYK2, SAPAP, SPTAN1, SYNJ1, SYNJ2, VCL/vinculin, and WASF. Interacts with PTPN12 and WASF1 via its SH3 domains; this interaction may mediate the partial PTPN12 and WASF1 translocation to focal adhesion sites.</text>
</comment>
<comment type="subcellular location">
    <subcellularLocation>
        <location evidence="3">Cytoplasm</location>
        <location evidence="3">Perinuclear region</location>
    </subcellularLocation>
    <subcellularLocation>
        <location evidence="3">Apical cell membrane</location>
    </subcellularLocation>
    <subcellularLocation>
        <location evidence="3">Cell junction</location>
        <location evidence="3">Focal adhesion</location>
    </subcellularLocation>
    <subcellularLocation>
        <location evidence="3">Cell projection</location>
        <location evidence="3">Lamellipodium</location>
    </subcellularLocation>
    <text evidence="3">Detected in the stress fibers, synaptosomal cytosol, postsynaptic density fraction, Z-disks and intercalated. The CBL/PTK2B/ARGBP2 complex is recruited to lipid rafts following growth factor stimulation. In pancreatic acinar cells, localized preferentially to the apical membrane. Colocalized with vinculin and filamentous actin at focal adhesions and lamellipodia of pancreatic cells.</text>
</comment>
<comment type="tissue specificity">
    <text evidence="6">Expressed in duodenum.</text>
</comment>
<comment type="domain">
    <text evidence="3">The first 2 SH3 domains are required for WASF1-binding. All 3 SH3 domains can bind independently to PTPN12.</text>
</comment>
<comment type="PTM">
    <text evidence="1">Ubiquitinated by CBL.</text>
</comment>
<comment type="PTM">
    <text evidence="3">Dephosphorylated by PTPN12.</text>
</comment>
<organism>
    <name type="scientific">Sus scrofa</name>
    <name type="common">Pig</name>
    <dbReference type="NCBI Taxonomy" id="9823"/>
    <lineage>
        <taxon>Eukaryota</taxon>
        <taxon>Metazoa</taxon>
        <taxon>Chordata</taxon>
        <taxon>Craniata</taxon>
        <taxon>Vertebrata</taxon>
        <taxon>Euteleostomi</taxon>
        <taxon>Mammalia</taxon>
        <taxon>Eutheria</taxon>
        <taxon>Laurasiatheria</taxon>
        <taxon>Artiodactyla</taxon>
        <taxon>Suina</taxon>
        <taxon>Suidae</taxon>
        <taxon>Sus</taxon>
    </lineage>
</organism>
<feature type="chain" id="PRO_0000072041" description="Sorbin and SH3 domain-containing protein 2">
    <location>
        <begin position="1"/>
        <end position="158"/>
    </location>
</feature>
<feature type="chain" id="PRO_0000344480" description="Sorbin">
    <location>
        <begin position="1"/>
        <end position="153"/>
    </location>
</feature>
<feature type="domain" description="SoHo" evidence="4">
    <location>
        <begin position="1"/>
        <end position="46"/>
    </location>
</feature>
<feature type="region of interest" description="Disordered" evidence="5">
    <location>
        <begin position="28"/>
        <end position="158"/>
    </location>
</feature>
<feature type="compositionally biased region" description="Polar residues" evidence="5">
    <location>
        <begin position="50"/>
        <end position="66"/>
    </location>
</feature>
<feature type="compositionally biased region" description="Basic and acidic residues" evidence="5">
    <location>
        <begin position="71"/>
        <end position="81"/>
    </location>
</feature>
<feature type="compositionally biased region" description="Pro residues" evidence="5">
    <location>
        <begin position="86"/>
        <end position="99"/>
    </location>
</feature>
<feature type="compositionally biased region" description="Basic and acidic residues" evidence="5">
    <location>
        <begin position="100"/>
        <end position="136"/>
    </location>
</feature>
<feature type="modified residue" description="Phosphoserine" evidence="3">
    <location>
        <position position="73"/>
    </location>
</feature>
<feature type="modified residue" description="Alanine amide" evidence="7">
    <location>
        <position position="153"/>
    </location>
</feature>
<feature type="sequence conflict" description="In Ref. 2; AA sequence." evidence="8" ref="2">
    <original>W</original>
    <variation>T</variation>
    <location>
        <position position="16"/>
    </location>
</feature>
<feature type="sequence conflict" description="In Ref. 2; AA sequence." evidence="8" ref="2">
    <original>D</original>
    <variation>K</variation>
    <location>
        <position position="35"/>
    </location>
</feature>
<feature type="sequence conflict" description="In Ref. 2; AA sequence." evidence="8" ref="2">
    <original>W</original>
    <variation>R</variation>
    <location>
        <position position="112"/>
    </location>
</feature>
<evidence type="ECO:0000250" key="1"/>
<evidence type="ECO:0000250" key="2">
    <source>
        <dbReference type="UniProtKB" id="O35413"/>
    </source>
</evidence>
<evidence type="ECO:0000250" key="3">
    <source>
        <dbReference type="UniProtKB" id="O94875"/>
    </source>
</evidence>
<evidence type="ECO:0000255" key="4">
    <source>
        <dbReference type="PROSITE-ProRule" id="PRU00195"/>
    </source>
</evidence>
<evidence type="ECO:0000256" key="5">
    <source>
        <dbReference type="SAM" id="MobiDB-lite"/>
    </source>
</evidence>
<evidence type="ECO:0000269" key="6">
    <source>
    </source>
</evidence>
<evidence type="ECO:0000269" key="7">
    <source>
    </source>
</evidence>
<evidence type="ECO:0000305" key="8"/>
<protein>
    <recommendedName>
        <fullName>Sorbin and SH3 domain-containing protein 2</fullName>
    </recommendedName>
    <alternativeName>
        <fullName>Arg-binding protein 2</fullName>
        <shortName>ArgBP2</shortName>
    </alternativeName>
    <component>
        <recommendedName>
            <fullName>Sorbin</fullName>
        </recommendedName>
    </component>
</protein>
<gene>
    <name type="primary">SORBS2</name>
</gene>
<sequence>MRAATPLQTVDRPKDWYKTMFKQIHMVHKPDDDTDMYNTPYTYNAGLYNSPYSAQSHPAAKTQTYRPLSKSHSDNGTDAFKDASSPVPPPHVPPPVPPLRPRDRSSTEKHDWDPPDRKVDTRKFRSEPRSIFEYEPGKSSILQHERPVTKPQAGRRKV</sequence>
<reference key="1">
    <citation type="journal article" date="2001" name="Peptides">
        <title>Coding region of the sorbin gene in different species.</title>
        <authorList>
            <person name="Wahbi K."/>
            <person name="Magaud J.-P."/>
            <person name="Pansu D."/>
            <person name="Descroix-Vagne M."/>
        </authorList>
    </citation>
    <scope>NUCLEOTIDE SEQUENCE [MRNA]</scope>
    <scope>TISSUE SPECIFICITY</scope>
    <source>
        <tissue>Duodenum</tissue>
        <tissue>Jejunum</tissue>
    </source>
</reference>
<reference key="2">
    <citation type="journal article" date="1991" name="Eur. J. Biochem.">
        <title>Isolation and characterisation of porcine sorbin.</title>
        <authorList>
            <person name="Vagne-Descroix M."/>
            <person name="Pansu D."/>
            <person name="Joernvall H."/>
            <person name="Carlquist M."/>
            <person name="Guignard H."/>
            <person name="Jourdan G."/>
            <person name="Desvigne A."/>
            <person name="Collinet M."/>
            <person name="Caillet C."/>
            <person name="Mutt V."/>
        </authorList>
    </citation>
    <scope>PROTEIN SEQUENCE OF 1-153</scope>
    <scope>AMIDATION AT ALA-153</scope>
    <source>
        <tissue>Intestine</tissue>
    </source>
</reference>
<accession>P28220</accession>
<accession>Q95ME6</accession>
<name>SRBS2_PIG</name>